<proteinExistence type="inferred from homology"/>
<gene>
    <name evidence="1" type="primary">pyrE2</name>
    <name type="ordered locus">mlr7756</name>
</gene>
<organism>
    <name type="scientific">Mesorhizobium japonicum (strain LMG 29417 / CECT 9101 / MAFF 303099)</name>
    <name type="common">Mesorhizobium loti (strain MAFF 303099)</name>
    <dbReference type="NCBI Taxonomy" id="266835"/>
    <lineage>
        <taxon>Bacteria</taxon>
        <taxon>Pseudomonadati</taxon>
        <taxon>Pseudomonadota</taxon>
        <taxon>Alphaproteobacteria</taxon>
        <taxon>Hyphomicrobiales</taxon>
        <taxon>Phyllobacteriaceae</taxon>
        <taxon>Mesorhizobium</taxon>
    </lineage>
</organism>
<comment type="function">
    <text evidence="1">Catalyzes the transfer of a ribosyl phosphate group from 5-phosphoribose 1-diphosphate to orotate, leading to the formation of orotidine monophosphate (OMP).</text>
</comment>
<comment type="catalytic activity">
    <reaction evidence="1">
        <text>orotidine 5'-phosphate + diphosphate = orotate + 5-phospho-alpha-D-ribose 1-diphosphate</text>
        <dbReference type="Rhea" id="RHEA:10380"/>
        <dbReference type="ChEBI" id="CHEBI:30839"/>
        <dbReference type="ChEBI" id="CHEBI:33019"/>
        <dbReference type="ChEBI" id="CHEBI:57538"/>
        <dbReference type="ChEBI" id="CHEBI:58017"/>
        <dbReference type="EC" id="2.4.2.10"/>
    </reaction>
</comment>
<comment type="cofactor">
    <cofactor evidence="1">
        <name>Mg(2+)</name>
        <dbReference type="ChEBI" id="CHEBI:18420"/>
    </cofactor>
</comment>
<comment type="pathway">
    <text evidence="1">Pyrimidine metabolism; UMP biosynthesis via de novo pathway; UMP from orotate: step 1/2.</text>
</comment>
<comment type="subunit">
    <text evidence="1">Homodimer.</text>
</comment>
<comment type="similarity">
    <text evidence="1">Belongs to the purine/pyrimidine phosphoribosyltransferase family. PyrE subfamily.</text>
</comment>
<accession>Q985B1</accession>
<reference key="1">
    <citation type="journal article" date="2000" name="DNA Res.">
        <title>Complete genome structure of the nitrogen-fixing symbiotic bacterium Mesorhizobium loti.</title>
        <authorList>
            <person name="Kaneko T."/>
            <person name="Nakamura Y."/>
            <person name="Sato S."/>
            <person name="Asamizu E."/>
            <person name="Kato T."/>
            <person name="Sasamoto S."/>
            <person name="Watanabe A."/>
            <person name="Idesawa K."/>
            <person name="Ishikawa A."/>
            <person name="Kawashima K."/>
            <person name="Kimura T."/>
            <person name="Kishida Y."/>
            <person name="Kiyokawa C."/>
            <person name="Kohara M."/>
            <person name="Matsumoto M."/>
            <person name="Matsuno A."/>
            <person name="Mochizuki Y."/>
            <person name="Nakayama S."/>
            <person name="Nakazaki N."/>
            <person name="Shimpo S."/>
            <person name="Sugimoto M."/>
            <person name="Takeuchi C."/>
            <person name="Yamada M."/>
            <person name="Tabata S."/>
        </authorList>
    </citation>
    <scope>NUCLEOTIDE SEQUENCE [LARGE SCALE GENOMIC DNA]</scope>
    <source>
        <strain>LMG 29417 / CECT 9101 / MAFF 303099</strain>
    </source>
</reference>
<protein>
    <recommendedName>
        <fullName evidence="1">Orotate phosphoribosyltransferase 2</fullName>
        <shortName evidence="1">OPRT 2</shortName>
        <shortName evidence="1">OPRTase 2</shortName>
        <ecNumber evidence="1">2.4.2.10</ecNumber>
    </recommendedName>
</protein>
<name>PYRE2_RHILO</name>
<evidence type="ECO:0000255" key="1">
    <source>
        <dbReference type="HAMAP-Rule" id="MF_01208"/>
    </source>
</evidence>
<keyword id="KW-0328">Glycosyltransferase</keyword>
<keyword id="KW-0460">Magnesium</keyword>
<keyword id="KW-0665">Pyrimidine biosynthesis</keyword>
<keyword id="KW-0808">Transferase</keyword>
<feature type="chain" id="PRO_0000110730" description="Orotate phosphoribosyltransferase 2">
    <location>
        <begin position="1"/>
        <end position="192"/>
    </location>
</feature>
<feature type="binding site" evidence="1">
    <location>
        <begin position="116"/>
        <end position="124"/>
    </location>
    <ligand>
        <name>5-phospho-alpha-D-ribose 1-diphosphate</name>
        <dbReference type="ChEBI" id="CHEBI:58017"/>
    </ligand>
</feature>
<feature type="binding site" evidence="1">
    <location>
        <position position="120"/>
    </location>
    <ligand>
        <name>orotate</name>
        <dbReference type="ChEBI" id="CHEBI:30839"/>
    </ligand>
</feature>
<feature type="binding site" evidence="1">
    <location>
        <position position="148"/>
    </location>
    <ligand>
        <name>orotate</name>
        <dbReference type="ChEBI" id="CHEBI:30839"/>
    </ligand>
</feature>
<dbReference type="EC" id="2.4.2.10" evidence="1"/>
<dbReference type="EMBL" id="BA000012">
    <property type="protein sequence ID" value="BAB54152.1"/>
    <property type="molecule type" value="Genomic_DNA"/>
</dbReference>
<dbReference type="RefSeq" id="WP_010915099.1">
    <property type="nucleotide sequence ID" value="NC_002678.2"/>
</dbReference>
<dbReference type="SMR" id="Q985B1"/>
<dbReference type="KEGG" id="mlo:mlr7756"/>
<dbReference type="PATRIC" id="fig|266835.9.peg.6210"/>
<dbReference type="eggNOG" id="COG0461">
    <property type="taxonomic scope" value="Bacteria"/>
</dbReference>
<dbReference type="HOGENOM" id="CLU_074878_3_0_5"/>
<dbReference type="UniPathway" id="UPA00070">
    <property type="reaction ID" value="UER00119"/>
</dbReference>
<dbReference type="Proteomes" id="UP000000552">
    <property type="component" value="Chromosome"/>
</dbReference>
<dbReference type="GO" id="GO:0000287">
    <property type="term" value="F:magnesium ion binding"/>
    <property type="evidence" value="ECO:0007669"/>
    <property type="project" value="UniProtKB-UniRule"/>
</dbReference>
<dbReference type="GO" id="GO:0004588">
    <property type="term" value="F:orotate phosphoribosyltransferase activity"/>
    <property type="evidence" value="ECO:0007669"/>
    <property type="project" value="UniProtKB-UniRule"/>
</dbReference>
<dbReference type="GO" id="GO:0044205">
    <property type="term" value="P:'de novo' UMP biosynthetic process"/>
    <property type="evidence" value="ECO:0007669"/>
    <property type="project" value="UniProtKB-UniRule"/>
</dbReference>
<dbReference type="GO" id="GO:0019856">
    <property type="term" value="P:pyrimidine nucleobase biosynthetic process"/>
    <property type="evidence" value="ECO:0007669"/>
    <property type="project" value="InterPro"/>
</dbReference>
<dbReference type="CDD" id="cd06223">
    <property type="entry name" value="PRTases_typeI"/>
    <property type="match status" value="1"/>
</dbReference>
<dbReference type="Gene3D" id="3.40.50.2020">
    <property type="match status" value="1"/>
</dbReference>
<dbReference type="HAMAP" id="MF_01208">
    <property type="entry name" value="PyrE"/>
    <property type="match status" value="1"/>
</dbReference>
<dbReference type="InterPro" id="IPR023031">
    <property type="entry name" value="OPRT"/>
</dbReference>
<dbReference type="InterPro" id="IPR006273">
    <property type="entry name" value="Orotate_PRibTrfase_bac"/>
</dbReference>
<dbReference type="InterPro" id="IPR000836">
    <property type="entry name" value="PRibTrfase_dom"/>
</dbReference>
<dbReference type="InterPro" id="IPR029057">
    <property type="entry name" value="PRTase-like"/>
</dbReference>
<dbReference type="NCBIfam" id="TIGR01367">
    <property type="entry name" value="pyrE_Therm"/>
    <property type="match status" value="1"/>
</dbReference>
<dbReference type="PANTHER" id="PTHR19278">
    <property type="entry name" value="OROTATE PHOSPHORIBOSYLTRANSFERASE"/>
    <property type="match status" value="1"/>
</dbReference>
<dbReference type="PANTHER" id="PTHR19278:SF9">
    <property type="entry name" value="URIDINE 5'-MONOPHOSPHATE SYNTHASE"/>
    <property type="match status" value="1"/>
</dbReference>
<dbReference type="Pfam" id="PF00156">
    <property type="entry name" value="Pribosyltran"/>
    <property type="match status" value="1"/>
</dbReference>
<dbReference type="SUPFAM" id="SSF53271">
    <property type="entry name" value="PRTase-like"/>
    <property type="match status" value="1"/>
</dbReference>
<dbReference type="PROSITE" id="PS00103">
    <property type="entry name" value="PUR_PYR_PR_TRANSFER"/>
    <property type="match status" value="1"/>
</dbReference>
<sequence length="192" mass="20826">MKTDEVLGIFREAGAVLEGHFILTSGLRSPVFLQKARVFMHADKTERLCRALAEKIRAAVPGKIDYVVGPAIGGLIPAYETSRHLGVPAIWVEREGGEFRLRRFEIARGARVVIVEDIVTTGLSIRETIECLRELGAEVVAAACIIDRSAGKTHVGVPLIALAEYEVPAYPPDRLPPELAAIPAVKPGSRNI</sequence>